<organism>
    <name type="scientific">Thermoplasma volcanium (strain ATCC 51530 / DSM 4299 / JCM 9571 / NBRC 15438 / GSS1)</name>
    <dbReference type="NCBI Taxonomy" id="273116"/>
    <lineage>
        <taxon>Archaea</taxon>
        <taxon>Methanobacteriati</taxon>
        <taxon>Thermoplasmatota</taxon>
        <taxon>Thermoplasmata</taxon>
        <taxon>Thermoplasmatales</taxon>
        <taxon>Thermoplasmataceae</taxon>
        <taxon>Thermoplasma</taxon>
    </lineage>
</organism>
<dbReference type="EC" id="2.5.1.6" evidence="1"/>
<dbReference type="EMBL" id="BA000011">
    <property type="protein sequence ID" value="BAB59157.1"/>
    <property type="molecule type" value="Genomic_DNA"/>
</dbReference>
<dbReference type="RefSeq" id="WP_010916272.1">
    <property type="nucleotide sequence ID" value="NC_002689.2"/>
</dbReference>
<dbReference type="SMR" id="Q97CT6"/>
<dbReference type="STRING" id="273116.gene:9380780"/>
<dbReference type="PaxDb" id="273116-14324229"/>
<dbReference type="GeneID" id="1441500"/>
<dbReference type="KEGG" id="tvo:TVG0012665"/>
<dbReference type="eggNOG" id="arCOG01678">
    <property type="taxonomic scope" value="Archaea"/>
</dbReference>
<dbReference type="HOGENOM" id="CLU_057642_0_0_2"/>
<dbReference type="OrthoDB" id="204488at2157"/>
<dbReference type="PhylomeDB" id="Q97CT6"/>
<dbReference type="UniPathway" id="UPA00315">
    <property type="reaction ID" value="UER00080"/>
</dbReference>
<dbReference type="Proteomes" id="UP000001017">
    <property type="component" value="Chromosome"/>
</dbReference>
<dbReference type="GO" id="GO:0005524">
    <property type="term" value="F:ATP binding"/>
    <property type="evidence" value="ECO:0007669"/>
    <property type="project" value="UniProtKB-UniRule"/>
</dbReference>
<dbReference type="GO" id="GO:0000287">
    <property type="term" value="F:magnesium ion binding"/>
    <property type="evidence" value="ECO:0007669"/>
    <property type="project" value="UniProtKB-UniRule"/>
</dbReference>
<dbReference type="GO" id="GO:0004478">
    <property type="term" value="F:methionine adenosyltransferase activity"/>
    <property type="evidence" value="ECO:0007669"/>
    <property type="project" value="UniProtKB-UniRule"/>
</dbReference>
<dbReference type="GO" id="GO:0006730">
    <property type="term" value="P:one-carbon metabolic process"/>
    <property type="evidence" value="ECO:0007669"/>
    <property type="project" value="UniProtKB-KW"/>
</dbReference>
<dbReference type="GO" id="GO:0006556">
    <property type="term" value="P:S-adenosylmethionine biosynthetic process"/>
    <property type="evidence" value="ECO:0007669"/>
    <property type="project" value="UniProtKB-UniRule"/>
</dbReference>
<dbReference type="Gene3D" id="3.30.300.10">
    <property type="match status" value="1"/>
</dbReference>
<dbReference type="Gene3D" id="3.30.300.280">
    <property type="entry name" value="S-adenosylmethionine synthetase, C-terminal domain"/>
    <property type="match status" value="1"/>
</dbReference>
<dbReference type="Gene3D" id="3.30.300.340">
    <property type="entry name" value="S-adenosylmethionine synthetase, N-terminal domain"/>
    <property type="match status" value="1"/>
</dbReference>
<dbReference type="HAMAP" id="MF_00136">
    <property type="entry name" value="S_AdoMet_synth2"/>
    <property type="match status" value="1"/>
</dbReference>
<dbReference type="InterPro" id="IPR042543">
    <property type="entry name" value="AdoMet_synthase_2"/>
</dbReference>
<dbReference type="InterPro" id="IPR027790">
    <property type="entry name" value="AdoMet_synthase_2_family"/>
</dbReference>
<dbReference type="InterPro" id="IPR042544">
    <property type="entry name" value="AdoMet_synthase_3"/>
</dbReference>
<dbReference type="InterPro" id="IPR002795">
    <property type="entry name" value="S-AdoMet_synthetase_arc"/>
</dbReference>
<dbReference type="NCBIfam" id="NF003364">
    <property type="entry name" value="PRK04439.1-3"/>
    <property type="match status" value="1"/>
</dbReference>
<dbReference type="NCBIfam" id="NF003366">
    <property type="entry name" value="PRK04439.1-5"/>
    <property type="match status" value="1"/>
</dbReference>
<dbReference type="PANTHER" id="PTHR36697">
    <property type="entry name" value="S-ADENOSYLMETHIONINE SYNTHASE"/>
    <property type="match status" value="1"/>
</dbReference>
<dbReference type="PANTHER" id="PTHR36697:SF1">
    <property type="entry name" value="S-ADENOSYLMETHIONINE SYNTHASE"/>
    <property type="match status" value="1"/>
</dbReference>
<dbReference type="Pfam" id="PF01941">
    <property type="entry name" value="AdoMet_Synthase"/>
    <property type="match status" value="1"/>
</dbReference>
<sequence>MERNISVEELNQIPTPKKEVEIVERKGIGHPDSVADGIAEAVSRSLSKYYLEHYGRILHHNTDQVEVVGGQSAPKYGGGLVLEPTYILLSGRATTKVGNDRVPYKSITIKAAKDYLRNNFSHLDVDADVMIDSRIGQGSVDLVEVYDTSKLEANDTSFGVGFAPLSETENIVLKTERYLNGSLKKKLPMVGYDIKVMGFRQKDTINLTVAAAFVDKYIKDADEYFNLKDQLKDLVLDNAVEETDKEVKVYINTADIRENSKSVGYLTVTGMSMENGDDGSVGRGNRVNGLITPYRAMSMEAAAGKNPVTHVGKLYNVLANKIANDIVQEEGNDIAEVLVRIVSQIGRPIDDPHVASVQVIYEGNVDHSKHKNNIRNLVNDRLAHVSDLTMQFVEGKITVF</sequence>
<keyword id="KW-0067">ATP-binding</keyword>
<keyword id="KW-0460">Magnesium</keyword>
<keyword id="KW-0547">Nucleotide-binding</keyword>
<keyword id="KW-0554">One-carbon metabolism</keyword>
<keyword id="KW-0808">Transferase</keyword>
<reference key="1">
    <citation type="journal article" date="2000" name="Proc. Natl. Acad. Sci. U.S.A.">
        <title>Archaeal adaptation to higher temperatures revealed by genomic sequence of Thermoplasma volcanium.</title>
        <authorList>
            <person name="Kawashima T."/>
            <person name="Amano N."/>
            <person name="Koike H."/>
            <person name="Makino S."/>
            <person name="Higuchi S."/>
            <person name="Kawashima-Ohya Y."/>
            <person name="Watanabe K."/>
            <person name="Yamazaki M."/>
            <person name="Kanehori K."/>
            <person name="Kawamoto T."/>
            <person name="Nunoshiba T."/>
            <person name="Yamamoto Y."/>
            <person name="Aramaki H."/>
            <person name="Makino K."/>
            <person name="Suzuki M."/>
        </authorList>
    </citation>
    <scope>NUCLEOTIDE SEQUENCE [LARGE SCALE GENOMIC DNA]</scope>
    <source>
        <strain>ATCC 51530 / DSM 4299 / JCM 9571 / NBRC 15438 / GSS1</strain>
    </source>
</reference>
<comment type="function">
    <text evidence="1">Catalyzes the formation of S-adenosylmethionine from methionine and ATP.</text>
</comment>
<comment type="catalytic activity">
    <reaction evidence="1">
        <text>L-methionine + ATP + H2O = S-adenosyl-L-methionine + phosphate + diphosphate</text>
        <dbReference type="Rhea" id="RHEA:21080"/>
        <dbReference type="ChEBI" id="CHEBI:15377"/>
        <dbReference type="ChEBI" id="CHEBI:30616"/>
        <dbReference type="ChEBI" id="CHEBI:33019"/>
        <dbReference type="ChEBI" id="CHEBI:43474"/>
        <dbReference type="ChEBI" id="CHEBI:57844"/>
        <dbReference type="ChEBI" id="CHEBI:59789"/>
        <dbReference type="EC" id="2.5.1.6"/>
    </reaction>
</comment>
<comment type="cofactor">
    <cofactor evidence="1">
        <name>Mg(2+)</name>
        <dbReference type="ChEBI" id="CHEBI:18420"/>
    </cofactor>
</comment>
<comment type="pathway">
    <text evidence="1">Amino-acid biosynthesis; S-adenosyl-L-methionine biosynthesis; S-adenosyl-L-methionine from L-methionine: step 1/1.</text>
</comment>
<comment type="similarity">
    <text evidence="1">Belongs to the AdoMet synthase 2 family.</text>
</comment>
<accession>Q97CT6</accession>
<proteinExistence type="inferred from homology"/>
<feature type="chain" id="PRO_0000150044" description="S-adenosylmethionine synthase">
    <location>
        <begin position="1"/>
        <end position="400"/>
    </location>
</feature>
<feature type="binding site" evidence="1">
    <location>
        <begin position="136"/>
        <end position="141"/>
    </location>
    <ligand>
        <name>ATP</name>
        <dbReference type="ChEBI" id="CHEBI:30616"/>
    </ligand>
</feature>
<name>METK_THEVO</name>
<gene>
    <name evidence="1" type="primary">mat</name>
    <name type="ordered locus">TV0015</name>
    <name type="ORF">TVG0012665</name>
</gene>
<evidence type="ECO:0000255" key="1">
    <source>
        <dbReference type="HAMAP-Rule" id="MF_00136"/>
    </source>
</evidence>
<protein>
    <recommendedName>
        <fullName evidence="1">S-adenosylmethionine synthase</fullName>
        <shortName evidence="1">AdoMet synthase</shortName>
        <ecNumber evidence="1">2.5.1.6</ecNumber>
    </recommendedName>
    <alternativeName>
        <fullName evidence="1">Methionine adenosyltransferase</fullName>
    </alternativeName>
</protein>